<proteinExistence type="inferred from homology"/>
<reference key="1">
    <citation type="journal article" date="2008" name="Nucleic Acids Res.">
        <title>The complete nucleotide sequences of the five genetically distinct plastid genomes of Oenothera, subsection Oenothera: I. Sequence evaluation and plastome evolution.</title>
        <authorList>
            <person name="Greiner S."/>
            <person name="Wang X."/>
            <person name="Rauwolf U."/>
            <person name="Silber M.V."/>
            <person name="Mayer K."/>
            <person name="Meurer J."/>
            <person name="Haberer G."/>
            <person name="Herrmann R.G."/>
        </authorList>
    </citation>
    <scope>NUCLEOTIDE SEQUENCE [LARGE SCALE GENOMIC DNA]</scope>
    <source>
        <strain>cv. Douthat 1</strain>
    </source>
</reference>
<protein>
    <recommendedName>
        <fullName evidence="1">DNA-directed RNA polymerase subunit beta''</fullName>
        <ecNumber evidence="1">2.7.7.6</ecNumber>
    </recommendedName>
    <alternativeName>
        <fullName evidence="1">PEP</fullName>
    </alternativeName>
    <alternativeName>
        <fullName evidence="1">Plastid-encoded RNA polymerase subunit beta''</fullName>
        <shortName evidence="1">RNA polymerase subunit beta''</shortName>
    </alternativeName>
</protein>
<sequence length="1383" mass="156577">MDEGVNLVFPKKVIDGTAIKRLISRLIDHFGMAHTSHILDQVKTLGFQQATATSISLGIDDLLTIPSKGWLVQDAEQQSLSLEKHHHYGNVHAVEKLRQSIEVWYATSEYLRQEMNPNFRMTDPFNPVHIMSFSGARGNASQVHQLVGMRGLMSDPQGQMIDLPIQSNLREGLSLTEYIISCYGARKGVVDTAVRTSDAGYLTRRLVEVVQHIVVRRTDCGTLRGISVSPRRMPERIFIQTLIGRVLADDIYIGSRCIAIRNQDIGIGLVNRFITFRIQPISIRTPFTCRSTSWICRLCYGRSPTHGDLVELGEAVGIIAGQSIGEPGTQLTLRTFHTGGVFTGGTAEHVRAPSNGKIKFNFNEALVHPARTRHGHPALLCSMDLDVTIESEDILHNLTIPPKSFLLVQNNQYVESEQVIAEICAGTSTFHFKERVRKHIYSDSEGEMHWSTDVYHAPEFTYSNVHLLPKTSHLWILSGGSCRSRGAPFSLHKDQDQMNPRSTERERRYLSSLSANNDQIRYKFFSSSFSGKKKDDRSPGYSEMNRIICTLPCNLIYPSILRENSDLLAKRRRNRLVIPVQSSQEREKELIPHSGISIELPINGIFRKKSILAFFDDPRYRTKSSGITQYETMGMHSIVKKEGLVDYRGINEFKPKYQMTIDRFFFIPEEVHILPESSSIMVRNNSLIGVDTRIALNTRSRAGGLVRVERKKRGIALQIFSGTIHFPGETDKISWDSGILIPPGTGKRNSKESKKWKNGIYVQRITPTKKKHFVLFRPVVTYEIADGLNLARLFPPDLCQEKDNMQLQIVNYIVYGNGKPIREISDTSIQLVRTWFILNWDQGKKSASAEAAHASFVEVRAKGLIRDFLRIDLVKSPILDPRKRNDPSGSGLISDNVSDHTNINPFYSKPKMKQSPRQNHGTIRTLLNQNKECPSLMILSASNCFRMGPFNDVKSQNVIKESIKKDAIIQIRNSIGPLGTALQVVNFDSFYYFITHNQVLLTKYLQVENLKQTFQVLQYYLMDESGRIYNPDPRSNIVLNSFNLSWYFLPHNNYENSCEEISTIVSLGQFICENGCIAKNGPYLRSGQVLIVRLDSVVIRSAKPYLATPGATVHGHYGEILYDGDTVVTFLYEKSRSGDITQGLPKVEQVLEVRSVDSISVNLEKRVENWNEHITRILGFPWGFLIGAELTIVQSRISLVNKIQKVYRSQGVQIHNRHIEIIVRQITSKVLVSEDGMSNVFLPRELIGLLRAERTGRALEESICYKAFLLGITRTSLNTQSFISEASFQETARVLAKAALRGRIDWLKGLKENVVIGGMIPVGTGFKGLVHCSKQHKSIPKNKHFFEGEIRDILFHHRELFDSCISKNFHDTPEQSFRVFNDS</sequence>
<accession>B0Z4M7</accession>
<dbReference type="EC" id="2.7.7.6" evidence="1"/>
<dbReference type="EMBL" id="EU262887">
    <property type="protein sequence ID" value="ABW98705.1"/>
    <property type="molecule type" value="Genomic_DNA"/>
</dbReference>
<dbReference type="RefSeq" id="YP_001687138.1">
    <property type="nucleotide sequence ID" value="NC_010358.2"/>
</dbReference>
<dbReference type="SMR" id="B0Z4M7"/>
<dbReference type="GeneID" id="5951922"/>
<dbReference type="GO" id="GO:0009507">
    <property type="term" value="C:chloroplast"/>
    <property type="evidence" value="ECO:0007669"/>
    <property type="project" value="UniProtKB-SubCell"/>
</dbReference>
<dbReference type="GO" id="GO:0000428">
    <property type="term" value="C:DNA-directed RNA polymerase complex"/>
    <property type="evidence" value="ECO:0007669"/>
    <property type="project" value="UniProtKB-KW"/>
</dbReference>
<dbReference type="GO" id="GO:0005739">
    <property type="term" value="C:mitochondrion"/>
    <property type="evidence" value="ECO:0007669"/>
    <property type="project" value="GOC"/>
</dbReference>
<dbReference type="GO" id="GO:0003677">
    <property type="term" value="F:DNA binding"/>
    <property type="evidence" value="ECO:0007669"/>
    <property type="project" value="UniProtKB-UniRule"/>
</dbReference>
<dbReference type="GO" id="GO:0003899">
    <property type="term" value="F:DNA-directed RNA polymerase activity"/>
    <property type="evidence" value="ECO:0007669"/>
    <property type="project" value="UniProtKB-UniRule"/>
</dbReference>
<dbReference type="GO" id="GO:0008270">
    <property type="term" value="F:zinc ion binding"/>
    <property type="evidence" value="ECO:0007669"/>
    <property type="project" value="UniProtKB-UniRule"/>
</dbReference>
<dbReference type="GO" id="GO:0006351">
    <property type="term" value="P:DNA-templated transcription"/>
    <property type="evidence" value="ECO:0007669"/>
    <property type="project" value="UniProtKB-UniRule"/>
</dbReference>
<dbReference type="CDD" id="cd02655">
    <property type="entry name" value="RNAP_beta'_C"/>
    <property type="match status" value="1"/>
</dbReference>
<dbReference type="FunFam" id="1.10.132.30:FF:000002">
    <property type="entry name" value="DNA-directed RNA polymerase subunit beta"/>
    <property type="match status" value="1"/>
</dbReference>
<dbReference type="Gene3D" id="1.10.132.30">
    <property type="match status" value="1"/>
</dbReference>
<dbReference type="Gene3D" id="1.10.150.390">
    <property type="match status" value="1"/>
</dbReference>
<dbReference type="Gene3D" id="1.10.1790.20">
    <property type="match status" value="1"/>
</dbReference>
<dbReference type="Gene3D" id="1.10.274.100">
    <property type="entry name" value="RNA polymerase Rpb1, domain 3"/>
    <property type="match status" value="1"/>
</dbReference>
<dbReference type="HAMAP" id="MF_01324">
    <property type="entry name" value="RNApol_bact_RpoC2"/>
    <property type="match status" value="1"/>
</dbReference>
<dbReference type="InterPro" id="IPR012756">
    <property type="entry name" value="DNA-dir_RpoC2_beta_pp"/>
</dbReference>
<dbReference type="InterPro" id="IPR050254">
    <property type="entry name" value="RNA_pol_beta''_euk"/>
</dbReference>
<dbReference type="InterPro" id="IPR042102">
    <property type="entry name" value="RNA_pol_Rpb1_3_sf"/>
</dbReference>
<dbReference type="InterPro" id="IPR007083">
    <property type="entry name" value="RNA_pol_Rpb1_4"/>
</dbReference>
<dbReference type="InterPro" id="IPR007081">
    <property type="entry name" value="RNA_pol_Rpb1_5"/>
</dbReference>
<dbReference type="InterPro" id="IPR038120">
    <property type="entry name" value="Rpb1_funnel_sf"/>
</dbReference>
<dbReference type="NCBIfam" id="TIGR02388">
    <property type="entry name" value="rpoC2_cyan"/>
    <property type="match status" value="1"/>
</dbReference>
<dbReference type="PANTHER" id="PTHR34995">
    <property type="entry name" value="DNA-DIRECTED RNA POLYMERASE SUBUNIT BETA"/>
    <property type="match status" value="1"/>
</dbReference>
<dbReference type="PANTHER" id="PTHR34995:SF1">
    <property type="entry name" value="DNA-DIRECTED RNA POLYMERASE SUBUNIT BETA"/>
    <property type="match status" value="1"/>
</dbReference>
<dbReference type="Pfam" id="PF05000">
    <property type="entry name" value="RNA_pol_Rpb1_4"/>
    <property type="match status" value="1"/>
</dbReference>
<dbReference type="Pfam" id="PF04998">
    <property type="entry name" value="RNA_pol_Rpb1_5"/>
    <property type="match status" value="2"/>
</dbReference>
<dbReference type="SUPFAM" id="SSF64484">
    <property type="entry name" value="beta and beta-prime subunits of DNA dependent RNA-polymerase"/>
    <property type="match status" value="1"/>
</dbReference>
<feature type="chain" id="PRO_0000353574" description="DNA-directed RNA polymerase subunit beta''">
    <location>
        <begin position="1"/>
        <end position="1383"/>
    </location>
</feature>
<feature type="binding site" evidence="1">
    <location>
        <position position="220"/>
    </location>
    <ligand>
        <name>Zn(2+)</name>
        <dbReference type="ChEBI" id="CHEBI:29105"/>
    </ligand>
</feature>
<feature type="binding site" evidence="1">
    <location>
        <position position="289"/>
    </location>
    <ligand>
        <name>Zn(2+)</name>
        <dbReference type="ChEBI" id="CHEBI:29105"/>
    </ligand>
</feature>
<feature type="binding site" evidence="1">
    <location>
        <position position="296"/>
    </location>
    <ligand>
        <name>Zn(2+)</name>
        <dbReference type="ChEBI" id="CHEBI:29105"/>
    </ligand>
</feature>
<feature type="binding site" evidence="1">
    <location>
        <position position="299"/>
    </location>
    <ligand>
        <name>Zn(2+)</name>
        <dbReference type="ChEBI" id="CHEBI:29105"/>
    </ligand>
</feature>
<geneLocation type="chloroplast"/>
<keyword id="KW-0150">Chloroplast</keyword>
<keyword id="KW-0240">DNA-directed RNA polymerase</keyword>
<keyword id="KW-0479">Metal-binding</keyword>
<keyword id="KW-0548">Nucleotidyltransferase</keyword>
<keyword id="KW-0934">Plastid</keyword>
<keyword id="KW-0804">Transcription</keyword>
<keyword id="KW-0808">Transferase</keyword>
<keyword id="KW-0862">Zinc</keyword>
<gene>
    <name evidence="1" type="primary">rpoC2</name>
</gene>
<organism>
    <name type="scientific">Oenothera argillicola</name>
    <name type="common">Appalachian evening primrose</name>
    <dbReference type="NCBI Taxonomy" id="3940"/>
    <lineage>
        <taxon>Eukaryota</taxon>
        <taxon>Viridiplantae</taxon>
        <taxon>Streptophyta</taxon>
        <taxon>Embryophyta</taxon>
        <taxon>Tracheophyta</taxon>
        <taxon>Spermatophyta</taxon>
        <taxon>Magnoliopsida</taxon>
        <taxon>eudicotyledons</taxon>
        <taxon>Gunneridae</taxon>
        <taxon>Pentapetalae</taxon>
        <taxon>rosids</taxon>
        <taxon>malvids</taxon>
        <taxon>Myrtales</taxon>
        <taxon>Onagraceae</taxon>
        <taxon>Onagroideae</taxon>
        <taxon>Onagreae</taxon>
        <taxon>Oenothera</taxon>
    </lineage>
</organism>
<evidence type="ECO:0000255" key="1">
    <source>
        <dbReference type="HAMAP-Rule" id="MF_01324"/>
    </source>
</evidence>
<comment type="function">
    <text evidence="1">DNA-dependent RNA polymerase catalyzes the transcription of DNA into RNA using the four ribonucleoside triphosphates as substrates.</text>
</comment>
<comment type="catalytic activity">
    <reaction evidence="1">
        <text>RNA(n) + a ribonucleoside 5'-triphosphate = RNA(n+1) + diphosphate</text>
        <dbReference type="Rhea" id="RHEA:21248"/>
        <dbReference type="Rhea" id="RHEA-COMP:14527"/>
        <dbReference type="Rhea" id="RHEA-COMP:17342"/>
        <dbReference type="ChEBI" id="CHEBI:33019"/>
        <dbReference type="ChEBI" id="CHEBI:61557"/>
        <dbReference type="ChEBI" id="CHEBI:140395"/>
        <dbReference type="EC" id="2.7.7.6"/>
    </reaction>
</comment>
<comment type="cofactor">
    <cofactor evidence="1">
        <name>Zn(2+)</name>
        <dbReference type="ChEBI" id="CHEBI:29105"/>
    </cofactor>
    <text evidence="1">Binds 1 Zn(2+) ion per subunit.</text>
</comment>
<comment type="subunit">
    <text evidence="1">In plastids the minimal PEP RNA polymerase catalytic core is composed of four subunits: alpha, beta, beta', and beta''. When a (nuclear-encoded) sigma factor is associated with the core the holoenzyme is formed, which can initiate transcription.</text>
</comment>
<comment type="subcellular location">
    <subcellularLocation>
        <location evidence="1">Plastid</location>
        <location evidence="1">Chloroplast</location>
    </subcellularLocation>
</comment>
<comment type="similarity">
    <text evidence="1">Belongs to the RNA polymerase beta' chain family. RpoC2 subfamily.</text>
</comment>
<name>RPOC2_OENAR</name>